<sequence>GGSCGQCRVEVHSGGGDILPTEEGHINKREAKSGCRLACQVAVKQDMEIEVEDEIFGVQQWECEVISNDNQATFIKELKLQIPNGESVPFKAGGYIQIEAPAHHVKYKDFDIDEQYKGDWNHFGFFDVESKVDEPTLRAYSMANYPEEEGIIMLNVRIATPPPGRLHLPAGKMSSFIFSLKEGDKVTISGPFGEFFAKETDNEMVFIGGGAGMAPMRSHIFDQLKRLQSKRKMSFWYGARSKREMFYEDDYNGLAADNDNFQWHVALSDPQPEDNWEGMTGFIHNVLFEEYLKDHEAPEDCEY</sequence>
<organism>
    <name type="scientific">Colwellia psychrerythraea</name>
    <name type="common">Vibrio psychroerythus</name>
    <dbReference type="NCBI Taxonomy" id="28229"/>
    <lineage>
        <taxon>Bacteria</taxon>
        <taxon>Pseudomonadati</taxon>
        <taxon>Pseudomonadota</taxon>
        <taxon>Gammaproteobacteria</taxon>
        <taxon>Alteromonadales</taxon>
        <taxon>Colwelliaceae</taxon>
        <taxon>Colwellia</taxon>
    </lineage>
</organism>
<gene>
    <name type="primary">nqrF</name>
    <name type="synonym">nqr6</name>
</gene>
<protein>
    <recommendedName>
        <fullName>Na(+)-translocating NADH-quinone reductase subunit F</fullName>
        <shortName>Na(+)-NQR subunit F</shortName>
        <shortName>Na(+)-translocating NQR subunit F</shortName>
        <ecNumber evidence="2">7.2.1.1</ecNumber>
    </recommendedName>
    <alternativeName>
        <fullName>NQR complex subunit F</fullName>
    </alternativeName>
    <alternativeName>
        <fullName>NQR-1 subunit F</fullName>
    </alternativeName>
</protein>
<comment type="function">
    <text evidence="2">NQR complex catalyzes the reduction of ubiquinone-1 to ubiquinol by two successive reactions, coupled with the transport of Na(+) ions from the cytoplasm to the periplasm. The first step is catalyzed by NqrF, which accepts electrons from NADH and reduces ubiquinone-1 to ubisemiquinone by a one-electron transfer pathway.</text>
</comment>
<comment type="catalytic activity">
    <reaction evidence="2">
        <text>a ubiquinone + n Na(+)(in) + NADH + H(+) = a ubiquinol + n Na(+)(out) + NAD(+)</text>
        <dbReference type="Rhea" id="RHEA:47748"/>
        <dbReference type="Rhea" id="RHEA-COMP:9565"/>
        <dbReference type="Rhea" id="RHEA-COMP:9566"/>
        <dbReference type="ChEBI" id="CHEBI:15378"/>
        <dbReference type="ChEBI" id="CHEBI:16389"/>
        <dbReference type="ChEBI" id="CHEBI:17976"/>
        <dbReference type="ChEBI" id="CHEBI:29101"/>
        <dbReference type="ChEBI" id="CHEBI:57540"/>
        <dbReference type="ChEBI" id="CHEBI:57945"/>
        <dbReference type="EC" id="7.2.1.1"/>
    </reaction>
</comment>
<comment type="cofactor">
    <cofactor evidence="1">
        <name>[2Fe-2S] cluster</name>
        <dbReference type="ChEBI" id="CHEBI:190135"/>
    </cofactor>
    <text evidence="1">Binds 1 [2Fe-2S] cluster.</text>
</comment>
<comment type="cofactor">
    <cofactor evidence="1">
        <name>FAD</name>
        <dbReference type="ChEBI" id="CHEBI:57692"/>
    </cofactor>
</comment>
<comment type="subunit">
    <text evidence="2">Composed of six subunits; NqrA, NqrB, NqrC, NqrD, NqrE and NqrF.</text>
</comment>
<comment type="subcellular location">
    <subcellularLocation>
        <location evidence="5">Cell inner membrane</location>
    </subcellularLocation>
</comment>
<comment type="similarity">
    <text evidence="5">Belongs to the NqrF family.</text>
</comment>
<accession>Q9LCJ2</accession>
<proteinExistence type="inferred from homology"/>
<dbReference type="EC" id="7.2.1.1" evidence="2"/>
<dbReference type="EMBL" id="AB024723">
    <property type="protein sequence ID" value="BAA83760.1"/>
    <property type="molecule type" value="Genomic_DNA"/>
</dbReference>
<dbReference type="SMR" id="Q9LCJ2"/>
<dbReference type="GO" id="GO:0005886">
    <property type="term" value="C:plasma membrane"/>
    <property type="evidence" value="ECO:0007669"/>
    <property type="project" value="UniProtKB-SubCell"/>
</dbReference>
<dbReference type="GO" id="GO:0051537">
    <property type="term" value="F:2 iron, 2 sulfur cluster binding"/>
    <property type="evidence" value="ECO:0007669"/>
    <property type="project" value="UniProtKB-KW"/>
</dbReference>
<dbReference type="GO" id="GO:0046872">
    <property type="term" value="F:metal ion binding"/>
    <property type="evidence" value="ECO:0007669"/>
    <property type="project" value="UniProtKB-KW"/>
</dbReference>
<dbReference type="GO" id="GO:0016655">
    <property type="term" value="F:oxidoreductase activity, acting on NAD(P)H, quinone or similar compound as acceptor"/>
    <property type="evidence" value="ECO:0007669"/>
    <property type="project" value="InterPro"/>
</dbReference>
<dbReference type="GO" id="GO:0006814">
    <property type="term" value="P:sodium ion transport"/>
    <property type="evidence" value="ECO:0007669"/>
    <property type="project" value="UniProtKB-KW"/>
</dbReference>
<dbReference type="CDD" id="cd00207">
    <property type="entry name" value="fer2"/>
    <property type="match status" value="1"/>
</dbReference>
<dbReference type="CDD" id="cd06188">
    <property type="entry name" value="NADH_quinone_reductase"/>
    <property type="match status" value="1"/>
</dbReference>
<dbReference type="FunFam" id="2.40.30.10:FF:000064">
    <property type="entry name" value="Na(+)-translocating NADH-quinone reductase subunit F"/>
    <property type="match status" value="1"/>
</dbReference>
<dbReference type="FunFam" id="3.40.50.80:FF:000014">
    <property type="entry name" value="Na(+)-translocating NADH-quinone reductase subunit F"/>
    <property type="match status" value="1"/>
</dbReference>
<dbReference type="Gene3D" id="3.10.20.30">
    <property type="match status" value="1"/>
</dbReference>
<dbReference type="Gene3D" id="3.40.50.80">
    <property type="entry name" value="Nucleotide-binding domain of ferredoxin-NADP reductase (FNR) module"/>
    <property type="match status" value="1"/>
</dbReference>
<dbReference type="Gene3D" id="2.40.30.10">
    <property type="entry name" value="Translation factors"/>
    <property type="match status" value="1"/>
</dbReference>
<dbReference type="InterPro" id="IPR036010">
    <property type="entry name" value="2Fe-2S_ferredoxin-like_sf"/>
</dbReference>
<dbReference type="InterPro" id="IPR001041">
    <property type="entry name" value="2Fe-2S_ferredoxin-type"/>
</dbReference>
<dbReference type="InterPro" id="IPR012675">
    <property type="entry name" value="Beta-grasp_dom_sf"/>
</dbReference>
<dbReference type="InterPro" id="IPR008333">
    <property type="entry name" value="Cbr1-like_FAD-bd_dom"/>
</dbReference>
<dbReference type="InterPro" id="IPR017927">
    <property type="entry name" value="FAD-bd_FR_type"/>
</dbReference>
<dbReference type="InterPro" id="IPR039261">
    <property type="entry name" value="FNR_nucleotide-bd"/>
</dbReference>
<dbReference type="InterPro" id="IPR010205">
    <property type="entry name" value="NqrF"/>
</dbReference>
<dbReference type="InterPro" id="IPR001433">
    <property type="entry name" value="OxRdtase_FAD/NAD-bd"/>
</dbReference>
<dbReference type="InterPro" id="IPR017938">
    <property type="entry name" value="Riboflavin_synthase-like_b-brl"/>
</dbReference>
<dbReference type="NCBIfam" id="TIGR01941">
    <property type="entry name" value="nqrF"/>
    <property type="match status" value="1"/>
</dbReference>
<dbReference type="PANTHER" id="PTHR43644">
    <property type="entry name" value="NA(+)-TRANSLOCATING NADH-QUINONE REDUCTASE SUBUNIT"/>
    <property type="match status" value="1"/>
</dbReference>
<dbReference type="PANTHER" id="PTHR43644:SF1">
    <property type="entry name" value="NAD(P)H-FLAVIN REDUCTASE"/>
    <property type="match status" value="1"/>
</dbReference>
<dbReference type="Pfam" id="PF00970">
    <property type="entry name" value="FAD_binding_6"/>
    <property type="match status" value="1"/>
</dbReference>
<dbReference type="Pfam" id="PF00175">
    <property type="entry name" value="NAD_binding_1"/>
    <property type="match status" value="1"/>
</dbReference>
<dbReference type="SUPFAM" id="SSF54292">
    <property type="entry name" value="2Fe-2S ferredoxin-like"/>
    <property type="match status" value="1"/>
</dbReference>
<dbReference type="SUPFAM" id="SSF52343">
    <property type="entry name" value="Ferredoxin reductase-like, C-terminal NADP-linked domain"/>
    <property type="match status" value="1"/>
</dbReference>
<dbReference type="SUPFAM" id="SSF63380">
    <property type="entry name" value="Riboflavin synthase domain-like"/>
    <property type="match status" value="1"/>
</dbReference>
<dbReference type="PROSITE" id="PS51384">
    <property type="entry name" value="FAD_FR"/>
    <property type="match status" value="1"/>
</dbReference>
<reference key="1">
    <citation type="journal article" date="2000" name="Can. J. Microbiol.">
        <title>Detection of the Na(+)-translocating NADH-quinone reductase in marine bacteria using a PCR technique.</title>
        <authorList>
            <person name="Kato S."/>
            <person name="Yumoto I."/>
        </authorList>
    </citation>
    <scope>NUCLEOTIDE SEQUENCE [GENOMIC DNA]</scope>
    <source>
        <strain>ATCC 27364 / DSM 8813 / NRC 1004</strain>
    </source>
</reference>
<name>NQRF_COLPS</name>
<feature type="chain" id="PRO_0000074494" description="Na(+)-translocating NADH-quinone reductase subunit F">
    <location>
        <begin position="1" status="less than"/>
        <end position="303" status="greater than"/>
    </location>
</feature>
<feature type="domain" description="2Fe-2S ferredoxin-type" evidence="3">
    <location>
        <begin position="1" status="less than"/>
        <end position="45"/>
    </location>
</feature>
<feature type="domain" description="FAD-binding FR-type" evidence="4">
    <location>
        <begin position="58"/>
        <end position="198"/>
    </location>
</feature>
<feature type="region of interest" description="Catalytic">
    <location>
        <begin position="201"/>
        <end position="303" status="greater than"/>
    </location>
</feature>
<feature type="binding site" evidence="3">
    <location>
        <position position="4"/>
    </location>
    <ligand>
        <name>[2Fe-2S] cluster</name>
        <dbReference type="ChEBI" id="CHEBI:190135"/>
    </ligand>
</feature>
<feature type="binding site" evidence="3">
    <location>
        <position position="7"/>
    </location>
    <ligand>
        <name>[2Fe-2S] cluster</name>
        <dbReference type="ChEBI" id="CHEBI:190135"/>
    </ligand>
</feature>
<feature type="binding site" evidence="3">
    <location>
        <position position="39"/>
    </location>
    <ligand>
        <name>[2Fe-2S] cluster</name>
        <dbReference type="ChEBI" id="CHEBI:190135"/>
    </ligand>
</feature>
<feature type="non-terminal residue">
    <location>
        <position position="1"/>
    </location>
</feature>
<feature type="non-terminal residue">
    <location>
        <position position="303"/>
    </location>
</feature>
<keyword id="KW-0001">2Fe-2S</keyword>
<keyword id="KW-0997">Cell inner membrane</keyword>
<keyword id="KW-1003">Cell membrane</keyword>
<keyword id="KW-0274">FAD</keyword>
<keyword id="KW-0285">Flavoprotein</keyword>
<keyword id="KW-0406">Ion transport</keyword>
<keyword id="KW-0408">Iron</keyword>
<keyword id="KW-0411">Iron-sulfur</keyword>
<keyword id="KW-0472">Membrane</keyword>
<keyword id="KW-0479">Metal-binding</keyword>
<keyword id="KW-0520">NAD</keyword>
<keyword id="KW-0915">Sodium</keyword>
<keyword id="KW-0739">Sodium transport</keyword>
<keyword id="KW-1278">Translocase</keyword>
<keyword id="KW-0813">Transport</keyword>
<keyword id="KW-0830">Ubiquinone</keyword>
<evidence type="ECO:0000250" key="1">
    <source>
        <dbReference type="UniProtKB" id="A5F5Y4"/>
    </source>
</evidence>
<evidence type="ECO:0000250" key="2">
    <source>
        <dbReference type="UniProtKB" id="Q56584"/>
    </source>
</evidence>
<evidence type="ECO:0000255" key="3">
    <source>
        <dbReference type="PROSITE-ProRule" id="PRU00465"/>
    </source>
</evidence>
<evidence type="ECO:0000255" key="4">
    <source>
        <dbReference type="PROSITE-ProRule" id="PRU00716"/>
    </source>
</evidence>
<evidence type="ECO:0000305" key="5"/>